<organism>
    <name type="scientific">Laribacter hongkongensis (strain HLHK9)</name>
    <dbReference type="NCBI Taxonomy" id="557598"/>
    <lineage>
        <taxon>Bacteria</taxon>
        <taxon>Pseudomonadati</taxon>
        <taxon>Pseudomonadota</taxon>
        <taxon>Betaproteobacteria</taxon>
        <taxon>Neisseriales</taxon>
        <taxon>Aquaspirillaceae</taxon>
        <taxon>Laribacter</taxon>
    </lineage>
</organism>
<dbReference type="EMBL" id="CP001154">
    <property type="protein sequence ID" value="ACO75956.1"/>
    <property type="molecule type" value="Genomic_DNA"/>
</dbReference>
<dbReference type="RefSeq" id="WP_012698419.1">
    <property type="nucleotide sequence ID" value="NC_012559.1"/>
</dbReference>
<dbReference type="SMR" id="C1D515"/>
<dbReference type="STRING" id="557598.LHK_02978"/>
<dbReference type="KEGG" id="lhk:LHK_02978"/>
<dbReference type="eggNOG" id="COG1295">
    <property type="taxonomic scope" value="Bacteria"/>
</dbReference>
<dbReference type="HOGENOM" id="CLU_032288_1_0_4"/>
<dbReference type="Proteomes" id="UP000002010">
    <property type="component" value="Chromosome"/>
</dbReference>
<dbReference type="GO" id="GO:0005886">
    <property type="term" value="C:plasma membrane"/>
    <property type="evidence" value="ECO:0007669"/>
    <property type="project" value="UniProtKB-SubCell"/>
</dbReference>
<dbReference type="HAMAP" id="MF_00672">
    <property type="entry name" value="UPF0761"/>
    <property type="match status" value="1"/>
</dbReference>
<dbReference type="InterPro" id="IPR023679">
    <property type="entry name" value="UPF0761_bac"/>
</dbReference>
<dbReference type="InterPro" id="IPR017039">
    <property type="entry name" value="Virul_fac_BrkB"/>
</dbReference>
<dbReference type="NCBIfam" id="NF003256">
    <property type="entry name" value="PRK04214.1"/>
    <property type="match status" value="1"/>
</dbReference>
<dbReference type="NCBIfam" id="TIGR00765">
    <property type="entry name" value="yihY_not_rbn"/>
    <property type="match status" value="1"/>
</dbReference>
<dbReference type="PANTHER" id="PTHR30213">
    <property type="entry name" value="INNER MEMBRANE PROTEIN YHJD"/>
    <property type="match status" value="1"/>
</dbReference>
<dbReference type="PANTHER" id="PTHR30213:SF0">
    <property type="entry name" value="UPF0761 MEMBRANE PROTEIN YIHY"/>
    <property type="match status" value="1"/>
</dbReference>
<dbReference type="Pfam" id="PF03631">
    <property type="entry name" value="Virul_fac_BrkB"/>
    <property type="match status" value="1"/>
</dbReference>
<name>Y2978_LARHH</name>
<protein>
    <recommendedName>
        <fullName evidence="1">UPF0761 membrane protein LHK_02978</fullName>
    </recommendedName>
</protein>
<comment type="subcellular location">
    <subcellularLocation>
        <location evidence="1">Cell inner membrane</location>
        <topology evidence="1">Multi-pass membrane protein</topology>
    </subcellularLocation>
</comment>
<comment type="similarity">
    <text evidence="1">Belongs to the UPF0761 family.</text>
</comment>
<keyword id="KW-0997">Cell inner membrane</keyword>
<keyword id="KW-1003">Cell membrane</keyword>
<keyword id="KW-0472">Membrane</keyword>
<keyword id="KW-1185">Reference proteome</keyword>
<keyword id="KW-0812">Transmembrane</keyword>
<keyword id="KW-1133">Transmembrane helix</keyword>
<sequence>MLRLSRLPLPPVLQRLTGFSLFVWRRAMQNRCLQVAASLTFTTLLSLVPLITITLIVVAAFPVFEELSSQFKEFLLRNLVPDFAGRIISVYLKQFTDNAGRLTAVGLALLAFTSLSLMLTIDRTFNAIWQVQRPRKLLHNMLVYWTVLTLGPLLLGVGISGSAWILNWSGLARTAPGLAGIIQNLGSLTLATVMLTVLYGLVPNCYVPRWHALIGGALTALTLGVAQAGFGLYVEISRTYQFIYGAFATFPFLLIWLQLMWLTVLIGAELTASLSYWKGDVWRREGDSQRRFCDALDTLVRLSQAQVHGRALGQADLRHHIDTGYDEIGRILDELARLGLVQRSAEGLWALLYRPESVSLLRLWHHFVLDLNASPADDAISHSLTELVRPLEAGLDISLAEFLHRYPPAGPAVTLPAVPRPG</sequence>
<accession>C1D515</accession>
<gene>
    <name type="ordered locus">LHK_02978</name>
</gene>
<feature type="chain" id="PRO_0000391037" description="UPF0761 membrane protein LHK_02978">
    <location>
        <begin position="1"/>
        <end position="422"/>
    </location>
</feature>
<feature type="transmembrane region" description="Helical" evidence="1">
    <location>
        <begin position="44"/>
        <end position="64"/>
    </location>
</feature>
<feature type="transmembrane region" description="Helical" evidence="1">
    <location>
        <begin position="102"/>
        <end position="122"/>
    </location>
</feature>
<feature type="transmembrane region" description="Helical" evidence="1">
    <location>
        <begin position="141"/>
        <end position="161"/>
    </location>
</feature>
<feature type="transmembrane region" description="Helical" evidence="1">
    <location>
        <begin position="178"/>
        <end position="198"/>
    </location>
</feature>
<feature type="transmembrane region" description="Helical" evidence="1">
    <location>
        <begin position="212"/>
        <end position="232"/>
    </location>
</feature>
<feature type="transmembrane region" description="Helical" evidence="1">
    <location>
        <begin position="246"/>
        <end position="266"/>
    </location>
</feature>
<reference key="1">
    <citation type="journal article" date="2009" name="PLoS Genet.">
        <title>The complete genome and proteome of Laribacter hongkongensis reveal potential mechanisms for adaptations to different temperatures and habitats.</title>
        <authorList>
            <person name="Woo P.C.Y."/>
            <person name="Lau S.K.P."/>
            <person name="Tse H."/>
            <person name="Teng J.L.L."/>
            <person name="Curreem S.O."/>
            <person name="Tsang A.K.L."/>
            <person name="Fan R.Y.Y."/>
            <person name="Wong G.K.M."/>
            <person name="Huang Y."/>
            <person name="Loman N.J."/>
            <person name="Snyder L.A.S."/>
            <person name="Cai J.J."/>
            <person name="Huang J.-D."/>
            <person name="Mak W."/>
            <person name="Pallen M.J."/>
            <person name="Lok S."/>
            <person name="Yuen K.-Y."/>
        </authorList>
    </citation>
    <scope>NUCLEOTIDE SEQUENCE [LARGE SCALE GENOMIC DNA]</scope>
    <source>
        <strain>HLHK9</strain>
    </source>
</reference>
<proteinExistence type="inferred from homology"/>
<evidence type="ECO:0000255" key="1">
    <source>
        <dbReference type="HAMAP-Rule" id="MF_00672"/>
    </source>
</evidence>